<reference key="1">
    <citation type="journal article" date="2000" name="Nature">
        <title>Sequence and analysis of chromosome 1 of the plant Arabidopsis thaliana.</title>
        <authorList>
            <person name="Theologis A."/>
            <person name="Ecker J.R."/>
            <person name="Palm C.J."/>
            <person name="Federspiel N.A."/>
            <person name="Kaul S."/>
            <person name="White O."/>
            <person name="Alonso J."/>
            <person name="Altafi H."/>
            <person name="Araujo R."/>
            <person name="Bowman C.L."/>
            <person name="Brooks S.Y."/>
            <person name="Buehler E."/>
            <person name="Chan A."/>
            <person name="Chao Q."/>
            <person name="Chen H."/>
            <person name="Cheuk R.F."/>
            <person name="Chin C.W."/>
            <person name="Chung M.K."/>
            <person name="Conn L."/>
            <person name="Conway A.B."/>
            <person name="Conway A.R."/>
            <person name="Creasy T.H."/>
            <person name="Dewar K."/>
            <person name="Dunn P."/>
            <person name="Etgu P."/>
            <person name="Feldblyum T.V."/>
            <person name="Feng J.-D."/>
            <person name="Fong B."/>
            <person name="Fujii C.Y."/>
            <person name="Gill J.E."/>
            <person name="Goldsmith A.D."/>
            <person name="Haas B."/>
            <person name="Hansen N.F."/>
            <person name="Hughes B."/>
            <person name="Huizar L."/>
            <person name="Hunter J.L."/>
            <person name="Jenkins J."/>
            <person name="Johnson-Hopson C."/>
            <person name="Khan S."/>
            <person name="Khaykin E."/>
            <person name="Kim C.J."/>
            <person name="Koo H.L."/>
            <person name="Kremenetskaia I."/>
            <person name="Kurtz D.B."/>
            <person name="Kwan A."/>
            <person name="Lam B."/>
            <person name="Langin-Hooper S."/>
            <person name="Lee A."/>
            <person name="Lee J.M."/>
            <person name="Lenz C.A."/>
            <person name="Li J.H."/>
            <person name="Li Y.-P."/>
            <person name="Lin X."/>
            <person name="Liu S.X."/>
            <person name="Liu Z.A."/>
            <person name="Luros J.S."/>
            <person name="Maiti R."/>
            <person name="Marziali A."/>
            <person name="Militscher J."/>
            <person name="Miranda M."/>
            <person name="Nguyen M."/>
            <person name="Nierman W.C."/>
            <person name="Osborne B.I."/>
            <person name="Pai G."/>
            <person name="Peterson J."/>
            <person name="Pham P.K."/>
            <person name="Rizzo M."/>
            <person name="Rooney T."/>
            <person name="Rowley D."/>
            <person name="Sakano H."/>
            <person name="Salzberg S.L."/>
            <person name="Schwartz J.R."/>
            <person name="Shinn P."/>
            <person name="Southwick A.M."/>
            <person name="Sun H."/>
            <person name="Tallon L.J."/>
            <person name="Tambunga G."/>
            <person name="Toriumi M.J."/>
            <person name="Town C.D."/>
            <person name="Utterback T."/>
            <person name="Van Aken S."/>
            <person name="Vaysberg M."/>
            <person name="Vysotskaia V.S."/>
            <person name="Walker M."/>
            <person name="Wu D."/>
            <person name="Yu G."/>
            <person name="Fraser C.M."/>
            <person name="Venter J.C."/>
            <person name="Davis R.W."/>
        </authorList>
    </citation>
    <scope>NUCLEOTIDE SEQUENCE [LARGE SCALE GENOMIC DNA]</scope>
    <source>
        <strain>cv. Columbia</strain>
    </source>
</reference>
<reference key="2">
    <citation type="journal article" date="2017" name="Plant J.">
        <title>Araport11: a complete reannotation of the Arabidopsis thaliana reference genome.</title>
        <authorList>
            <person name="Cheng C.Y."/>
            <person name="Krishnakumar V."/>
            <person name="Chan A.P."/>
            <person name="Thibaud-Nissen F."/>
            <person name="Schobel S."/>
            <person name="Town C.D."/>
        </authorList>
    </citation>
    <scope>GENOME REANNOTATION</scope>
    <source>
        <strain>cv. Columbia</strain>
    </source>
</reference>
<reference key="3">
    <citation type="journal article" date="2010" name="BMC Genomics">
        <title>Genome-wide cloning and sequence analysis of leucine-rich repeat receptor-like protein kinase genes in Arabidopsis thaliana.</title>
        <authorList>
            <person name="Gou X."/>
            <person name="He K."/>
            <person name="Yang H."/>
            <person name="Yuan T."/>
            <person name="Lin H."/>
            <person name="Clouse S.D."/>
            <person name="Li J."/>
        </authorList>
    </citation>
    <scope>NUCLEOTIDE SEQUENCE [LARGE SCALE MRNA]</scope>
    <source>
        <strain>cv. Columbia</strain>
    </source>
</reference>
<reference key="4">
    <citation type="submission" date="2006-07" db="EMBL/GenBank/DDBJ databases">
        <title>Large-scale analysis of RIKEN Arabidopsis full-length (RAFL) cDNAs.</title>
        <authorList>
            <person name="Totoki Y."/>
            <person name="Seki M."/>
            <person name="Ishida J."/>
            <person name="Nakajima M."/>
            <person name="Enju A."/>
            <person name="Kamiya A."/>
            <person name="Narusaka M."/>
            <person name="Shin-i T."/>
            <person name="Nakagawa M."/>
            <person name="Sakamoto N."/>
            <person name="Oishi K."/>
            <person name="Kohara Y."/>
            <person name="Kobayashi M."/>
            <person name="Toyoda A."/>
            <person name="Sakaki Y."/>
            <person name="Sakurai T."/>
            <person name="Iida K."/>
            <person name="Akiyama K."/>
            <person name="Satou M."/>
            <person name="Toyoda T."/>
            <person name="Konagaya A."/>
            <person name="Carninci P."/>
            <person name="Kawai J."/>
            <person name="Hayashizaki Y."/>
            <person name="Shinozaki K."/>
        </authorList>
    </citation>
    <scope>NUCLEOTIDE SEQUENCE [LARGE SCALE MRNA]</scope>
    <source>
        <strain>cv. Columbia</strain>
    </source>
</reference>
<accession>Q9C9N5</accession>
<accession>Q0WPB5</accession>
<keyword id="KW-1003">Cell membrane</keyword>
<keyword id="KW-0325">Glycoprotein</keyword>
<keyword id="KW-0433">Leucine-rich repeat</keyword>
<keyword id="KW-0472">Membrane</keyword>
<keyword id="KW-0597">Phosphoprotein</keyword>
<keyword id="KW-0675">Receptor</keyword>
<keyword id="KW-1185">Reference proteome</keyword>
<keyword id="KW-0677">Repeat</keyword>
<keyword id="KW-0732">Signal</keyword>
<keyword id="KW-0812">Transmembrane</keyword>
<keyword id="KW-1133">Transmembrane helix</keyword>
<comment type="subcellular location">
    <subcellularLocation>
        <location evidence="1">Cell membrane</location>
        <topology evidence="1">Single-pass type I membrane protein</topology>
    </subcellularLocation>
</comment>
<comment type="domain">
    <text>The protein kinase domain is predicted to be catalytically inactive.</text>
</comment>
<comment type="similarity">
    <text evidence="6">Belongs to the protein kinase superfamily. Ser/Thr protein kinase family.</text>
</comment>
<evidence type="ECO:0000250" key="1"/>
<evidence type="ECO:0000250" key="2">
    <source>
        <dbReference type="UniProtKB" id="Q94AG2"/>
    </source>
</evidence>
<evidence type="ECO:0000250" key="3">
    <source>
        <dbReference type="UniProtKB" id="Q94F62"/>
    </source>
</evidence>
<evidence type="ECO:0000250" key="4">
    <source>
        <dbReference type="UniProtKB" id="Q9LSI9"/>
    </source>
</evidence>
<evidence type="ECO:0000255" key="5"/>
<evidence type="ECO:0000255" key="6">
    <source>
        <dbReference type="PROSITE-ProRule" id="PRU00159"/>
    </source>
</evidence>
<evidence type="ECO:0000305" key="7"/>
<dbReference type="EMBL" id="AC013288">
    <property type="protein sequence ID" value="AAG60082.1"/>
    <property type="molecule type" value="Genomic_DNA"/>
</dbReference>
<dbReference type="EMBL" id="CP002684">
    <property type="protein sequence ID" value="AEE34560.1"/>
    <property type="molecule type" value="Genomic_DNA"/>
</dbReference>
<dbReference type="EMBL" id="FJ708670">
    <property type="protein sequence ID" value="ACN59265.1"/>
    <property type="molecule type" value="mRNA"/>
</dbReference>
<dbReference type="EMBL" id="AK229161">
    <property type="protein sequence ID" value="BAF01034.1"/>
    <property type="molecule type" value="mRNA"/>
</dbReference>
<dbReference type="RefSeq" id="NP_176855.1">
    <property type="nucleotide sequence ID" value="NM_105354.3"/>
</dbReference>
<dbReference type="SMR" id="Q9C9N5"/>
<dbReference type="BioGRID" id="28222">
    <property type="interactions" value="37"/>
</dbReference>
<dbReference type="IntAct" id="Q9C9N5">
    <property type="interactions" value="35"/>
</dbReference>
<dbReference type="STRING" id="3702.Q9C9N5"/>
<dbReference type="GlyGen" id="Q9C9N5">
    <property type="glycosylation" value="5 sites"/>
</dbReference>
<dbReference type="iPTMnet" id="Q9C9N5"/>
<dbReference type="PaxDb" id="3702-AT1G66830.1"/>
<dbReference type="ProteomicsDB" id="243036"/>
<dbReference type="EnsemblPlants" id="AT1G66830.1">
    <property type="protein sequence ID" value="AT1G66830.1"/>
    <property type="gene ID" value="AT1G66830"/>
</dbReference>
<dbReference type="GeneID" id="843001"/>
<dbReference type="Gramene" id="AT1G66830.1">
    <property type="protein sequence ID" value="AT1G66830.1"/>
    <property type="gene ID" value="AT1G66830"/>
</dbReference>
<dbReference type="KEGG" id="ath:AT1G66830"/>
<dbReference type="Araport" id="AT1G66830"/>
<dbReference type="TAIR" id="AT1G66830"/>
<dbReference type="eggNOG" id="ENOG502SJN0">
    <property type="taxonomic scope" value="Eukaryota"/>
</dbReference>
<dbReference type="HOGENOM" id="CLU_000288_92_6_1"/>
<dbReference type="InParanoid" id="Q9C9N5"/>
<dbReference type="OMA" id="DQISPME"/>
<dbReference type="PhylomeDB" id="Q9C9N5"/>
<dbReference type="PRO" id="PR:Q9C9N5"/>
<dbReference type="Proteomes" id="UP000006548">
    <property type="component" value="Chromosome 1"/>
</dbReference>
<dbReference type="ExpressionAtlas" id="Q9C9N5">
    <property type="expression patterns" value="baseline and differential"/>
</dbReference>
<dbReference type="GO" id="GO:0005886">
    <property type="term" value="C:plasma membrane"/>
    <property type="evidence" value="ECO:0007669"/>
    <property type="project" value="UniProtKB-SubCell"/>
</dbReference>
<dbReference type="GO" id="GO:0005524">
    <property type="term" value="F:ATP binding"/>
    <property type="evidence" value="ECO:0007669"/>
    <property type="project" value="InterPro"/>
</dbReference>
<dbReference type="GO" id="GO:0004672">
    <property type="term" value="F:protein kinase activity"/>
    <property type="evidence" value="ECO:0007669"/>
    <property type="project" value="InterPro"/>
</dbReference>
<dbReference type="FunFam" id="3.80.10.10:FF:001020">
    <property type="entry name" value="Leucine rich repeat receptor protein kinase 2"/>
    <property type="match status" value="1"/>
</dbReference>
<dbReference type="FunFam" id="3.30.200.20:FF:001004">
    <property type="entry name" value="Probable inactive leucine-rich repeat receptor-like protein kinase At1g66830"/>
    <property type="match status" value="1"/>
</dbReference>
<dbReference type="FunFam" id="3.80.10.10:FF:001132">
    <property type="entry name" value="Probable inactive leucine-rich repeat receptor-like protein kinase At1g66830"/>
    <property type="match status" value="1"/>
</dbReference>
<dbReference type="Gene3D" id="3.30.200.20">
    <property type="entry name" value="Phosphorylase Kinase, domain 1"/>
    <property type="match status" value="1"/>
</dbReference>
<dbReference type="Gene3D" id="3.80.10.10">
    <property type="entry name" value="Ribonuclease Inhibitor"/>
    <property type="match status" value="2"/>
</dbReference>
<dbReference type="Gene3D" id="1.10.510.10">
    <property type="entry name" value="Transferase(Phosphotransferase) domain 1"/>
    <property type="match status" value="1"/>
</dbReference>
<dbReference type="InterPro" id="IPR011009">
    <property type="entry name" value="Kinase-like_dom_sf"/>
</dbReference>
<dbReference type="InterPro" id="IPR001611">
    <property type="entry name" value="Leu-rich_rpt"/>
</dbReference>
<dbReference type="InterPro" id="IPR032675">
    <property type="entry name" value="LRR_dom_sf"/>
</dbReference>
<dbReference type="InterPro" id="IPR013210">
    <property type="entry name" value="LRR_N_plant-typ"/>
</dbReference>
<dbReference type="InterPro" id="IPR046959">
    <property type="entry name" value="PRK1-6/SRF4-like"/>
</dbReference>
<dbReference type="InterPro" id="IPR000719">
    <property type="entry name" value="Prot_kinase_dom"/>
</dbReference>
<dbReference type="InterPro" id="IPR001245">
    <property type="entry name" value="Ser-Thr/Tyr_kinase_cat_dom"/>
</dbReference>
<dbReference type="PANTHER" id="PTHR48007">
    <property type="entry name" value="LEUCINE-RICH REPEAT RECEPTOR-LIKE PROTEIN KINASE PXC1"/>
    <property type="match status" value="1"/>
</dbReference>
<dbReference type="PANTHER" id="PTHR48007:SF83">
    <property type="entry name" value="PROTEIN KINASE DOMAIN-CONTAINING PROTEIN"/>
    <property type="match status" value="1"/>
</dbReference>
<dbReference type="Pfam" id="PF00560">
    <property type="entry name" value="LRR_1"/>
    <property type="match status" value="5"/>
</dbReference>
<dbReference type="Pfam" id="PF08263">
    <property type="entry name" value="LRRNT_2"/>
    <property type="match status" value="1"/>
</dbReference>
<dbReference type="Pfam" id="PF07714">
    <property type="entry name" value="PK_Tyr_Ser-Thr"/>
    <property type="match status" value="1"/>
</dbReference>
<dbReference type="SUPFAM" id="SSF52058">
    <property type="entry name" value="L domain-like"/>
    <property type="match status" value="1"/>
</dbReference>
<dbReference type="SUPFAM" id="SSF56112">
    <property type="entry name" value="Protein kinase-like (PK-like)"/>
    <property type="match status" value="1"/>
</dbReference>
<dbReference type="PROSITE" id="PS50011">
    <property type="entry name" value="PROTEIN_KINASE_DOM"/>
    <property type="match status" value="1"/>
</dbReference>
<protein>
    <recommendedName>
        <fullName>Probable inactive leucine-rich repeat receptor-like protein kinase At1g66830</fullName>
    </recommendedName>
</protein>
<organism>
    <name type="scientific">Arabidopsis thaliana</name>
    <name type="common">Mouse-ear cress</name>
    <dbReference type="NCBI Taxonomy" id="3702"/>
    <lineage>
        <taxon>Eukaryota</taxon>
        <taxon>Viridiplantae</taxon>
        <taxon>Streptophyta</taxon>
        <taxon>Embryophyta</taxon>
        <taxon>Tracheophyta</taxon>
        <taxon>Spermatophyta</taxon>
        <taxon>Magnoliopsida</taxon>
        <taxon>eudicotyledons</taxon>
        <taxon>Gunneridae</taxon>
        <taxon>Pentapetalae</taxon>
        <taxon>rosids</taxon>
        <taxon>malvids</taxon>
        <taxon>Brassicales</taxon>
        <taxon>Brassicaceae</taxon>
        <taxon>Camelineae</taxon>
        <taxon>Arabidopsis</taxon>
    </lineage>
</organism>
<gene>
    <name type="ordered locus">At1g66830</name>
    <name type="ORF">F4N21.23</name>
</gene>
<proteinExistence type="evidence at transcript level"/>
<name>Y1668_ARATH</name>
<sequence length="685" mass="76025">MSQLFLILCFILTHFFAIATSLNDQGLALLSFKQSIQNQSDSVFTNWNSSDSNPCSWQGVTCNYDMRVVSIRLPNKRLSGSLDPSIGSLLSLRHINLRDNDFQGKLPVELFGLKGLQSLVLSGNSFSGFVPEEIGSLKSLMTLDLSENSFNGSISLSLIPCKKLKTLVLSKNSFSGDLPTGLGSNLVHLRTLNLSFNRLTGTIPEDVGSLENLKGTLDLSHNFFSGMIPTSLGNLPELLYVDLSYNNLSGPIPKFNVLLNAGPNAFQGNPFLCGLPIKISCSTRNTQVVPSQLYTRRANHHSRLCIILTATGGTVAGIIFLASLFIYYLRKASARANKDQNNRTCHINEKLKKTTKPEFLCFKTGNSESETLDENKNQQVFMPMDPEIEFDLDQLLKASAFLLGKSRIGLVYKVVLENGLMLAVRRLEDKGWLRLKEFLADVEAMAKIKHPNVLNLKACCWSPEEKLLIYDYIPNGDLGSAIQGRPGSVSCKQLTWTVRLKILRGIAKGLTYIHEFSPKRYVHGHINTSNILLGPNLEPKVSGFGLGRIVDTSSDIRSDQISPMETSSPILSRESYYQAPEAASKMTKPSQKWDVYSFGLVILEMVTGKSPVSSEMDLVMWVESASERNKPAWYVLDPVLARDRDLEDSMVQVIKIGLACVQKNPDKRPHMRSVLESFEKLVTSI</sequence>
<feature type="signal peptide" evidence="5">
    <location>
        <begin position="1"/>
        <end position="21"/>
    </location>
</feature>
<feature type="chain" id="PRO_0000401343" description="Probable inactive leucine-rich repeat receptor-like protein kinase At1g66830">
    <location>
        <begin position="22"/>
        <end position="685"/>
    </location>
</feature>
<feature type="topological domain" description="Extracellular" evidence="5">
    <location>
        <begin position="22"/>
        <end position="305"/>
    </location>
</feature>
<feature type="transmembrane region" description="Helical" evidence="5">
    <location>
        <begin position="306"/>
        <end position="326"/>
    </location>
</feature>
<feature type="topological domain" description="Cytoplasmic" evidence="5">
    <location>
        <begin position="327"/>
        <end position="685"/>
    </location>
</feature>
<feature type="repeat" description="LRR 1">
    <location>
        <begin position="65"/>
        <end position="89"/>
    </location>
</feature>
<feature type="repeat" description="LRR 2">
    <location>
        <begin position="90"/>
        <end position="113"/>
    </location>
</feature>
<feature type="repeat" description="LRR 3">
    <location>
        <begin position="115"/>
        <end position="136"/>
    </location>
</feature>
<feature type="repeat" description="LRR 4">
    <location>
        <begin position="137"/>
        <end position="161"/>
    </location>
</feature>
<feature type="repeat" description="LRR 5">
    <location>
        <begin position="162"/>
        <end position="185"/>
    </location>
</feature>
<feature type="repeat" description="LRR 6">
    <location>
        <begin position="186"/>
        <end position="210"/>
    </location>
</feature>
<feature type="repeat" description="LRR 7">
    <location>
        <begin position="212"/>
        <end position="234"/>
    </location>
</feature>
<feature type="repeat" description="LRR 8">
    <location>
        <begin position="235"/>
        <end position="260"/>
    </location>
</feature>
<feature type="domain" description="Protein kinase" evidence="6">
    <location>
        <begin position="397"/>
        <end position="682"/>
    </location>
</feature>
<feature type="modified residue" description="Phosphoserine" evidence="3">
    <location>
        <position position="399"/>
    </location>
</feature>
<feature type="modified residue" description="Phosphoserine" evidence="4">
    <location>
        <position position="480"/>
    </location>
</feature>
<feature type="modified residue" description="Phosphoserine" evidence="2">
    <location>
        <position position="590"/>
    </location>
</feature>
<feature type="glycosylation site" description="N-linked (GlcNAc...) asparagine" evidence="5">
    <location>
        <position position="38"/>
    </location>
</feature>
<feature type="glycosylation site" description="N-linked (GlcNAc...) asparagine" evidence="5">
    <location>
        <position position="48"/>
    </location>
</feature>
<feature type="glycosylation site" description="N-linked (GlcNAc...) asparagine" evidence="5">
    <location>
        <position position="151"/>
    </location>
</feature>
<feature type="glycosylation site" description="N-linked (GlcNAc...) asparagine" evidence="5">
    <location>
        <position position="193"/>
    </location>
</feature>
<feature type="glycosylation site" description="N-linked (GlcNAc...) asparagine" evidence="5">
    <location>
        <position position="247"/>
    </location>
</feature>
<feature type="sequence conflict" description="In Ref. 4; BAF01034." evidence="7" ref="4">
    <original>N</original>
    <variation>D</variation>
    <location>
        <position position="264"/>
    </location>
</feature>